<organism>
    <name type="scientific">Penicillium roqueforti (strain FM164)</name>
    <dbReference type="NCBI Taxonomy" id="1365484"/>
    <lineage>
        <taxon>Eukaryota</taxon>
        <taxon>Fungi</taxon>
        <taxon>Dikarya</taxon>
        <taxon>Ascomycota</taxon>
        <taxon>Pezizomycotina</taxon>
        <taxon>Eurotiomycetes</taxon>
        <taxon>Eurotiomycetidae</taxon>
        <taxon>Eurotiales</taxon>
        <taxon>Aspergillaceae</taxon>
        <taxon>Penicillium</taxon>
    </lineage>
</organism>
<keyword id="KW-0017">Alkaloid metabolism</keyword>
<keyword id="KW-0489">Methyltransferase</keyword>
<keyword id="KW-1185">Reference proteome</keyword>
<keyword id="KW-0808">Transferase</keyword>
<reference key="1">
    <citation type="journal article" date="2014" name="Nat. Commun.">
        <title>Multiple recent horizontal transfers of a large genomic region in cheese making fungi.</title>
        <authorList>
            <person name="Cheeseman K."/>
            <person name="Ropars J."/>
            <person name="Renault P."/>
            <person name="Dupont J."/>
            <person name="Gouzy J."/>
            <person name="Branca A."/>
            <person name="Abraham A.-L."/>
            <person name="Ceppi M."/>
            <person name="Conseiller E."/>
            <person name="Debuchy R."/>
            <person name="Malagnac F."/>
            <person name="Goarin A."/>
            <person name="Silar P."/>
            <person name="Lacoste S."/>
            <person name="Sallet E."/>
            <person name="Bensimon A."/>
            <person name="Giraud T."/>
            <person name="Brygoo Y."/>
        </authorList>
    </citation>
    <scope>NUCLEOTIDE SEQUENCE [LARGE SCALE GENOMIC DNA]</scope>
    <source>
        <strain>FM164</strain>
    </source>
</reference>
<reference key="2">
    <citation type="journal article" date="2017" name="Appl. Microbiol. Biotechnol.">
        <title>Silencing of a second dimethylallyltryptophan synthase of Penicillium roqueforti reveals a novel clavine alkaloid gene cluster.</title>
        <authorList>
            <person name="Fernandez-Bodega A."/>
            <person name="Alvarez-Alvarez R."/>
            <person name="Liras P."/>
            <person name="Martin J.F."/>
        </authorList>
    </citation>
    <scope>FUNCTION</scope>
    <scope>PATHWAY</scope>
</reference>
<reference key="3">
    <citation type="journal article" date="2017" name="Org. Biomol. Chem.">
        <title>A bifunctional old yellow enzyme from Penicillium roqueforti is involved in ergot alkaloid biosynthesis.</title>
        <authorList>
            <person name="Gerhards N."/>
            <person name="Li S.M."/>
        </authorList>
    </citation>
    <scope>FUNCTION</scope>
</reference>
<protein>
    <recommendedName>
        <fullName evidence="4">4-dimethylallyltryptophan N-methyltransferase ifgB</fullName>
        <ecNumber evidence="1">2.1.1.261</ecNumber>
    </recommendedName>
    <alternativeName>
        <fullName evidence="4">Isofumigaclavine biosynthesis cluster A protein B</fullName>
    </alternativeName>
</protein>
<feature type="chain" id="PRO_0000444537" description="4-dimethylallyltryptophan N-methyltransferase ifgB">
    <location>
        <begin position="1"/>
        <end position="340"/>
    </location>
</feature>
<gene>
    <name evidence="4" type="primary">ifgB</name>
    <name type="ORF">PROQFM164_S05g000509</name>
</gene>
<comment type="function">
    <text evidence="2 3">4-dimethylallyltryptophan N-methyltransferase; part of the gene cluster that mediates the biosynthesis of isofumigaclavines, fungal ergot alkaloids (PubMed:28620689). The tryptophan dimethylallyltransferase ifgA catalyzes the first step of ergot alkaloid biosynthesis by condensing dimethylallyl diphosphate (DMAP) and tryptophan to form 4-dimethylallyl-L-tryptophan (PubMed:28620689). The second step is catalyzed by the methyltransferase ifgB that methylates 4-dimethylallyl-L-tryptophan in the presence of S-adenosyl-L-methionine, resulting in the formation of N-methyl-dimethylallyl-L-tryptophan (PubMed:28620689). The catalase ifgD and the FAD-dependent oxidoreductase ifgC then transform N-methyl-dimethylallyl-L-tryptophan to chanoclavine-I which is further oxidized by ifgE in the presence of NAD(+), resulting in the formation of chanoclavine-I aldehyde (PubMed:28902217). The chanoclavine-I aldehyde reductases ifgG and/or fgaOx3 reduce chanoclavine-I aldehyde to dihydrochanoclavine-I aldehyde that spontaneously dehydrates to form 6,8-dimethyl-6,7-didehydroergoline (PubMed:28620689, PubMed:28902217). The festuclavine dehydrogenases ifgF1 and/or ifgF2 then catalyze the reduction of 6,8-dimethyl-6,7-didehydroergoline to form festuclavine (PubMed:28620689). Hydrolysis of festuclavine by a yet undetermined cytochrome P450 monooxygenase (called ifgH) then leads to the formation of isofumigaclavine B which is in turn acetylated by ifgI to isofumigaclavine A (PubMed:28620689). Penicillium roqueforti has interestingly at least two sets of genes for the consumption of chanoclavine-I aldehyde on three different loci, the OYEs ifgG/fgaOx3 and the festuclavine synthase homologs ifgF1/ifgF2 (PubMed:28620689, PubMed:28902217). The reason for the duplication of these genes is unclear, probably to ensure the conversion of chanoclavine-I aldehyde by differential gene expression under various environmental conditions (PubMed:28902217).</text>
</comment>
<comment type="catalytic activity">
    <reaction evidence="1">
        <text>4-(3-methylbut-2-enyl)-L-tryptophan + S-adenosyl-L-methionine = 4-(3-methylbut-2-enyl)-L-abrine + S-adenosyl-L-homocysteine + H(+)</text>
        <dbReference type="Rhea" id="RHEA:34435"/>
        <dbReference type="ChEBI" id="CHEBI:15378"/>
        <dbReference type="ChEBI" id="CHEBI:57856"/>
        <dbReference type="ChEBI" id="CHEBI:58209"/>
        <dbReference type="ChEBI" id="CHEBI:59789"/>
        <dbReference type="ChEBI" id="CHEBI:67248"/>
        <dbReference type="EC" id="2.1.1.261"/>
    </reaction>
</comment>
<comment type="pathway">
    <text evidence="6">Alkaloid biosynthesis; ergot alkaloid biosynthesis.</text>
</comment>
<comment type="subunit">
    <text evidence="1">Homodimer.</text>
</comment>
<comment type="similarity">
    <text evidence="5">Belongs to the methyltransferase superfamily.</text>
</comment>
<dbReference type="EC" id="2.1.1.261" evidence="1"/>
<dbReference type="EMBL" id="HG792019">
    <property type="protein sequence ID" value="CDM36676.1"/>
    <property type="molecule type" value="Genomic_DNA"/>
</dbReference>
<dbReference type="SMR" id="W6QL00"/>
<dbReference type="STRING" id="1365484.W6QL00"/>
<dbReference type="OMA" id="FGCSYKY"/>
<dbReference type="OrthoDB" id="659at2759"/>
<dbReference type="UniPathway" id="UPA00327"/>
<dbReference type="Proteomes" id="UP000030686">
    <property type="component" value="Unassembled WGS sequence"/>
</dbReference>
<dbReference type="GO" id="GO:0008168">
    <property type="term" value="F:methyltransferase activity"/>
    <property type="evidence" value="ECO:0007669"/>
    <property type="project" value="UniProtKB-KW"/>
</dbReference>
<dbReference type="GO" id="GO:0035835">
    <property type="term" value="P:indole alkaloid biosynthetic process"/>
    <property type="evidence" value="ECO:0007669"/>
    <property type="project" value="UniProtKB-UniPathway"/>
</dbReference>
<dbReference type="GO" id="GO:0032259">
    <property type="term" value="P:methylation"/>
    <property type="evidence" value="ECO:0007669"/>
    <property type="project" value="UniProtKB-KW"/>
</dbReference>
<dbReference type="Gene3D" id="3.40.50.150">
    <property type="entry name" value="Vaccinia Virus protein VP39"/>
    <property type="match status" value="1"/>
</dbReference>
<dbReference type="InterPro" id="IPR051128">
    <property type="entry name" value="EgtD_Methyltrsf_superfamily"/>
</dbReference>
<dbReference type="InterPro" id="IPR019257">
    <property type="entry name" value="MeTrfase_dom"/>
</dbReference>
<dbReference type="InterPro" id="IPR017804">
    <property type="entry name" value="MeTrfase_EgtD-like"/>
</dbReference>
<dbReference type="InterPro" id="IPR029063">
    <property type="entry name" value="SAM-dependent_MTases_sf"/>
</dbReference>
<dbReference type="InterPro" id="IPR017805">
    <property type="entry name" value="SAM_MeTrfase_EasF-type_put"/>
</dbReference>
<dbReference type="NCBIfam" id="TIGR03439">
    <property type="entry name" value="methyl_EasF"/>
    <property type="match status" value="1"/>
</dbReference>
<dbReference type="PANTHER" id="PTHR43397">
    <property type="entry name" value="ERGOTHIONEINE BIOSYNTHESIS PROTEIN 1"/>
    <property type="match status" value="1"/>
</dbReference>
<dbReference type="PANTHER" id="PTHR43397:SF1">
    <property type="entry name" value="ERGOTHIONEINE BIOSYNTHESIS PROTEIN 1"/>
    <property type="match status" value="1"/>
</dbReference>
<dbReference type="Pfam" id="PF10017">
    <property type="entry name" value="Methyltransf_33"/>
    <property type="match status" value="1"/>
</dbReference>
<dbReference type="PIRSF" id="PIRSF018005">
    <property type="entry name" value="UCP018005"/>
    <property type="match status" value="1"/>
</dbReference>
<accession>W6QL00</accession>
<name>IFGB_PENRF</name>
<evidence type="ECO:0000250" key="1">
    <source>
        <dbReference type="UniProtKB" id="B6D5I7"/>
    </source>
</evidence>
<evidence type="ECO:0000269" key="2">
    <source>
    </source>
</evidence>
<evidence type="ECO:0000269" key="3">
    <source>
    </source>
</evidence>
<evidence type="ECO:0000303" key="4">
    <source>
    </source>
</evidence>
<evidence type="ECO:0000305" key="5"/>
<evidence type="ECO:0000305" key="6">
    <source>
    </source>
</evidence>
<proteinExistence type="inferred from homology"/>
<sequence length="340" mass="37904">MTIINSRIIDIRQSTFEESIPDQVTAGLSTTPKTLPALLFYSGEGIRHWIEHSTAADFYPRHEELRILRARAAEMVDSIANNSVVVDLGSASLDKVLPLLEALEASKKNITFYALDLSFSELQSTLQSLPYEQFKFVKIGALHGTFEDGVQWLKDTPGVQDRPHCLLLFGLTVGNYSRPNAAKFLQNIASNALAASPVQSSILLSLDSCKMPTKVLRAYTAEGVVPFALASLDYGNTLFAPNKMGEKVFQPSDWYFLSEWNYMLGRHEASLITKGKEVRLGGPLNDIVIEKHEKIRFGCSYKYDTDERQVLFGSAGLTDVKEWSVEGCDVSFYQLQMCPN</sequence>